<dbReference type="EMBL" id="CR380947">
    <property type="protein sequence ID" value="CAG57774.1"/>
    <property type="molecule type" value="Genomic_DNA"/>
</dbReference>
<dbReference type="RefSeq" id="XP_444881.1">
    <property type="nucleotide sequence ID" value="XM_444881.1"/>
</dbReference>
<dbReference type="SMR" id="Q6FY61"/>
<dbReference type="FunCoup" id="Q6FY61">
    <property type="interactions" value="1058"/>
</dbReference>
<dbReference type="STRING" id="284593.Q6FY61"/>
<dbReference type="EnsemblFungi" id="CAGL0A02673g-T">
    <property type="protein sequence ID" value="CAGL0A02673g-T-p1"/>
    <property type="gene ID" value="CAGL0A02673g"/>
</dbReference>
<dbReference type="KEGG" id="cgr:2886368"/>
<dbReference type="CGD" id="CAL0126797">
    <property type="gene designation" value="CAGL0A02673g"/>
</dbReference>
<dbReference type="VEuPathDB" id="FungiDB:B1J91_A02673g"/>
<dbReference type="VEuPathDB" id="FungiDB:CAGL0A02673g"/>
<dbReference type="eggNOG" id="KOG3034">
    <property type="taxonomic scope" value="Eukaryota"/>
</dbReference>
<dbReference type="HOGENOM" id="CLU_068770_2_1_1"/>
<dbReference type="InParanoid" id="Q6FY61"/>
<dbReference type="OMA" id="VKFYRKE"/>
<dbReference type="Proteomes" id="UP000002428">
    <property type="component" value="Chromosome A"/>
</dbReference>
<dbReference type="GO" id="GO:0005737">
    <property type="term" value="C:cytoplasm"/>
    <property type="evidence" value="ECO:0007669"/>
    <property type="project" value="UniProtKB-SubCell"/>
</dbReference>
<dbReference type="GO" id="GO:0005634">
    <property type="term" value="C:nucleus"/>
    <property type="evidence" value="ECO:0007669"/>
    <property type="project" value="UniProtKB-SubCell"/>
</dbReference>
<dbReference type="GO" id="GO:0015031">
    <property type="term" value="P:protein transport"/>
    <property type="evidence" value="ECO:0007669"/>
    <property type="project" value="UniProtKB-KW"/>
</dbReference>
<dbReference type="InterPro" id="IPR025602">
    <property type="entry name" value="BCP1_family"/>
</dbReference>
<dbReference type="PANTHER" id="PTHR13261">
    <property type="entry name" value="BRCA2 AND CDKN1A INTERACTING PROTEIN"/>
    <property type="match status" value="1"/>
</dbReference>
<dbReference type="PANTHER" id="PTHR13261:SF0">
    <property type="entry name" value="BRCA2 AND CDKN1A-INTERACTING PROTEIN"/>
    <property type="match status" value="1"/>
</dbReference>
<dbReference type="Pfam" id="PF13862">
    <property type="entry name" value="BCCIP"/>
    <property type="match status" value="1"/>
</dbReference>
<dbReference type="PIRSF" id="PIRSF028983">
    <property type="entry name" value="BCP1"/>
    <property type="match status" value="1"/>
</dbReference>
<reference key="1">
    <citation type="journal article" date="2004" name="Nature">
        <title>Genome evolution in yeasts.</title>
        <authorList>
            <person name="Dujon B."/>
            <person name="Sherman D."/>
            <person name="Fischer G."/>
            <person name="Durrens P."/>
            <person name="Casaregola S."/>
            <person name="Lafontaine I."/>
            <person name="de Montigny J."/>
            <person name="Marck C."/>
            <person name="Neuveglise C."/>
            <person name="Talla E."/>
            <person name="Goffard N."/>
            <person name="Frangeul L."/>
            <person name="Aigle M."/>
            <person name="Anthouard V."/>
            <person name="Babour A."/>
            <person name="Barbe V."/>
            <person name="Barnay S."/>
            <person name="Blanchin S."/>
            <person name="Beckerich J.-M."/>
            <person name="Beyne E."/>
            <person name="Bleykasten C."/>
            <person name="Boisrame A."/>
            <person name="Boyer J."/>
            <person name="Cattolico L."/>
            <person name="Confanioleri F."/>
            <person name="de Daruvar A."/>
            <person name="Despons L."/>
            <person name="Fabre E."/>
            <person name="Fairhead C."/>
            <person name="Ferry-Dumazet H."/>
            <person name="Groppi A."/>
            <person name="Hantraye F."/>
            <person name="Hennequin C."/>
            <person name="Jauniaux N."/>
            <person name="Joyet P."/>
            <person name="Kachouri R."/>
            <person name="Kerrest A."/>
            <person name="Koszul R."/>
            <person name="Lemaire M."/>
            <person name="Lesur I."/>
            <person name="Ma L."/>
            <person name="Muller H."/>
            <person name="Nicaud J.-M."/>
            <person name="Nikolski M."/>
            <person name="Oztas S."/>
            <person name="Ozier-Kalogeropoulos O."/>
            <person name="Pellenz S."/>
            <person name="Potier S."/>
            <person name="Richard G.-F."/>
            <person name="Straub M.-L."/>
            <person name="Suleau A."/>
            <person name="Swennen D."/>
            <person name="Tekaia F."/>
            <person name="Wesolowski-Louvel M."/>
            <person name="Westhof E."/>
            <person name="Wirth B."/>
            <person name="Zeniou-Meyer M."/>
            <person name="Zivanovic Y."/>
            <person name="Bolotin-Fukuhara M."/>
            <person name="Thierry A."/>
            <person name="Bouchier C."/>
            <person name="Caudron B."/>
            <person name="Scarpelli C."/>
            <person name="Gaillardin C."/>
            <person name="Weissenbach J."/>
            <person name="Wincker P."/>
            <person name="Souciet J.-L."/>
        </authorList>
    </citation>
    <scope>NUCLEOTIDE SEQUENCE [LARGE SCALE GENOMIC DNA]</scope>
    <source>
        <strain>ATCC 2001 / BCRC 20586 / JCM 3761 / NBRC 0622 / NRRL Y-65 / CBS 138</strain>
    </source>
</reference>
<accession>Q6FY61</accession>
<comment type="function">
    <text evidence="1">Involved in nuclear export, actin cytoskeleton organization and vesicular transport.</text>
</comment>
<comment type="subcellular location">
    <subcellularLocation>
        <location evidence="2">Cytoplasm</location>
    </subcellularLocation>
    <subcellularLocation>
        <location evidence="2">Nucleus</location>
    </subcellularLocation>
</comment>
<comment type="similarity">
    <text evidence="4">Belongs to the BCP1 family.</text>
</comment>
<gene>
    <name type="primary">BCP1</name>
    <name type="ordered locus">CAGL0A02673g</name>
</gene>
<organism>
    <name type="scientific">Candida glabrata (strain ATCC 2001 / BCRC 20586 / JCM 3761 / NBRC 0622 / NRRL Y-65 / CBS 138)</name>
    <name type="common">Yeast</name>
    <name type="synonym">Nakaseomyces glabratus</name>
    <dbReference type="NCBI Taxonomy" id="284593"/>
    <lineage>
        <taxon>Eukaryota</taxon>
        <taxon>Fungi</taxon>
        <taxon>Dikarya</taxon>
        <taxon>Ascomycota</taxon>
        <taxon>Saccharomycotina</taxon>
        <taxon>Saccharomycetes</taxon>
        <taxon>Saccharomycetales</taxon>
        <taxon>Saccharomycetaceae</taxon>
        <taxon>Nakaseomyces</taxon>
    </lineage>
</organism>
<feature type="chain" id="PRO_0000249699" description="Protein BCP1">
    <location>
        <begin position="1"/>
        <end position="276"/>
    </location>
</feature>
<feature type="region of interest" description="Disordered" evidence="3">
    <location>
        <begin position="1"/>
        <end position="43"/>
    </location>
</feature>
<feature type="compositionally biased region" description="Acidic residues" evidence="3">
    <location>
        <begin position="20"/>
        <end position="43"/>
    </location>
</feature>
<sequence>MVQAIKLSELGNRKRRNDPVNEDEESEIDISSTDSEEENAGDEEQEIVNIDFDFFDGNPDVDFHAVKHLIRQLLGPQESNRVQLSALSDLILSSPTTTIKTDGKESDPYCFLSFINYKENKDSDYAKYLRKLDTRIETFLQTLDNTGNKSCALVMSERLINMPPEVVTPLYRITMEDAAAANEGKPFDFYVIVSRKYEVNFDMDEAEGDASARSKKRVRGKSEVDYFHEEDRFFEKHAKVHFDGESKKGLIASYIIIDHDSLVKSINEFEQEVSTW</sequence>
<evidence type="ECO:0000250" key="1"/>
<evidence type="ECO:0000250" key="2">
    <source>
        <dbReference type="UniProtKB" id="Q06338"/>
    </source>
</evidence>
<evidence type="ECO:0000256" key="3">
    <source>
        <dbReference type="SAM" id="MobiDB-lite"/>
    </source>
</evidence>
<evidence type="ECO:0000305" key="4"/>
<protein>
    <recommendedName>
        <fullName>Protein BCP1</fullName>
    </recommendedName>
</protein>
<name>BCP1_CANGA</name>
<keyword id="KW-0963">Cytoplasm</keyword>
<keyword id="KW-0539">Nucleus</keyword>
<keyword id="KW-0653">Protein transport</keyword>
<keyword id="KW-1185">Reference proteome</keyword>
<keyword id="KW-0813">Transport</keyword>
<proteinExistence type="inferred from homology"/>